<evidence type="ECO:0000255" key="1">
    <source>
        <dbReference type="HAMAP-Rule" id="MF_00519"/>
    </source>
</evidence>
<organism>
    <name type="scientific">Bacillus licheniformis (strain ATCC 14580 / DSM 13 / JCM 2505 / CCUG 7422 / NBRC 12200 / NCIMB 9375 / NCTC 10341 / NRRL NRS-1264 / Gibson 46)</name>
    <dbReference type="NCBI Taxonomy" id="279010"/>
    <lineage>
        <taxon>Bacteria</taxon>
        <taxon>Bacillati</taxon>
        <taxon>Bacillota</taxon>
        <taxon>Bacilli</taxon>
        <taxon>Bacillales</taxon>
        <taxon>Bacillaceae</taxon>
        <taxon>Bacillus</taxon>
    </lineage>
</organism>
<name>ARAA2_BACLD</name>
<dbReference type="EC" id="5.3.1.4" evidence="1"/>
<dbReference type="EMBL" id="AE017333">
    <property type="protein sequence ID" value="AAU40954.1"/>
    <property type="molecule type" value="Genomic_DNA"/>
</dbReference>
<dbReference type="EMBL" id="CP000002">
    <property type="protein sequence ID" value="AAU23592.1"/>
    <property type="molecule type" value="Genomic_DNA"/>
</dbReference>
<dbReference type="SMR" id="Q65J10"/>
<dbReference type="STRING" id="279010.BL01182"/>
<dbReference type="KEGG" id="bld:BLi02064"/>
<dbReference type="KEGG" id="bli:BL01182"/>
<dbReference type="PATRIC" id="fig|279010.13.peg.2071"/>
<dbReference type="eggNOG" id="COG2160">
    <property type="taxonomic scope" value="Bacteria"/>
</dbReference>
<dbReference type="HOGENOM" id="CLU_045663_0_0_9"/>
<dbReference type="BRENDA" id="5.3.1.4">
    <property type="organism ID" value="669"/>
</dbReference>
<dbReference type="UniPathway" id="UPA00145">
    <property type="reaction ID" value="UER00565"/>
</dbReference>
<dbReference type="Proteomes" id="UP000000606">
    <property type="component" value="Chromosome"/>
</dbReference>
<dbReference type="GO" id="GO:0005829">
    <property type="term" value="C:cytosol"/>
    <property type="evidence" value="ECO:0007669"/>
    <property type="project" value="TreeGrafter"/>
</dbReference>
<dbReference type="GO" id="GO:0008733">
    <property type="term" value="F:L-arabinose isomerase activity"/>
    <property type="evidence" value="ECO:0007669"/>
    <property type="project" value="UniProtKB-UniRule"/>
</dbReference>
<dbReference type="GO" id="GO:0030145">
    <property type="term" value="F:manganese ion binding"/>
    <property type="evidence" value="ECO:0007669"/>
    <property type="project" value="UniProtKB-UniRule"/>
</dbReference>
<dbReference type="GO" id="GO:0019569">
    <property type="term" value="P:L-arabinose catabolic process to xylulose 5-phosphate"/>
    <property type="evidence" value="ECO:0007669"/>
    <property type="project" value="UniProtKB-UniRule"/>
</dbReference>
<dbReference type="Gene3D" id="3.40.50.10940">
    <property type="match status" value="1"/>
</dbReference>
<dbReference type="HAMAP" id="MF_00519">
    <property type="entry name" value="Arabinose_Isome"/>
    <property type="match status" value="1"/>
</dbReference>
<dbReference type="InterPro" id="IPR024664">
    <property type="entry name" value="Ara_Isoase_C"/>
</dbReference>
<dbReference type="InterPro" id="IPR055390">
    <property type="entry name" value="AraA_central"/>
</dbReference>
<dbReference type="InterPro" id="IPR055389">
    <property type="entry name" value="AraA_N"/>
</dbReference>
<dbReference type="InterPro" id="IPR038583">
    <property type="entry name" value="AraA_N_sf"/>
</dbReference>
<dbReference type="InterPro" id="IPR004216">
    <property type="entry name" value="Fuc/Ara_isomerase_C"/>
</dbReference>
<dbReference type="InterPro" id="IPR009015">
    <property type="entry name" value="Fucose_isomerase_N/cen_sf"/>
</dbReference>
<dbReference type="InterPro" id="IPR003762">
    <property type="entry name" value="Lara_isomerase"/>
</dbReference>
<dbReference type="NCBIfam" id="NF002795">
    <property type="entry name" value="PRK02929.1"/>
    <property type="match status" value="1"/>
</dbReference>
<dbReference type="PANTHER" id="PTHR38464">
    <property type="entry name" value="L-ARABINOSE ISOMERASE"/>
    <property type="match status" value="1"/>
</dbReference>
<dbReference type="PANTHER" id="PTHR38464:SF1">
    <property type="entry name" value="L-ARABINOSE ISOMERASE"/>
    <property type="match status" value="1"/>
</dbReference>
<dbReference type="Pfam" id="PF24856">
    <property type="entry name" value="AraA_central"/>
    <property type="match status" value="1"/>
</dbReference>
<dbReference type="Pfam" id="PF02610">
    <property type="entry name" value="AraA_N"/>
    <property type="match status" value="1"/>
</dbReference>
<dbReference type="Pfam" id="PF11762">
    <property type="entry name" value="Arabinose_Iso_C"/>
    <property type="match status" value="1"/>
</dbReference>
<dbReference type="PIRSF" id="PIRSF001478">
    <property type="entry name" value="L-ara_isomerase"/>
    <property type="match status" value="1"/>
</dbReference>
<dbReference type="SUPFAM" id="SSF50443">
    <property type="entry name" value="FucI/AraA C-terminal domain-like"/>
    <property type="match status" value="1"/>
</dbReference>
<dbReference type="SUPFAM" id="SSF53743">
    <property type="entry name" value="FucI/AraA N-terminal and middle domains"/>
    <property type="match status" value="1"/>
</dbReference>
<comment type="function">
    <text evidence="1">Catalyzes the conversion of L-arabinose to L-ribulose.</text>
</comment>
<comment type="catalytic activity">
    <reaction evidence="1">
        <text>beta-L-arabinopyranose = L-ribulose</text>
        <dbReference type="Rhea" id="RHEA:14821"/>
        <dbReference type="ChEBI" id="CHEBI:16880"/>
        <dbReference type="ChEBI" id="CHEBI:40886"/>
        <dbReference type="EC" id="5.3.1.4"/>
    </reaction>
</comment>
<comment type="cofactor">
    <cofactor evidence="1">
        <name>Mn(2+)</name>
        <dbReference type="ChEBI" id="CHEBI:29035"/>
    </cofactor>
    <text evidence="1">Binds 1 Mn(2+) ion per subunit.</text>
</comment>
<comment type="pathway">
    <text evidence="1">Carbohydrate degradation; L-arabinose degradation via L-ribulose; D-xylulose 5-phosphate from L-arabinose (bacterial route): step 1/3.</text>
</comment>
<comment type="similarity">
    <text evidence="1">Belongs to the arabinose isomerase family.</text>
</comment>
<accession>Q65J10</accession>
<accession>Q62UG7</accession>
<gene>
    <name evidence="1" type="primary">araA2</name>
    <name type="ordered locus">BLi02064</name>
    <name type="ordered locus">BL01182</name>
</gene>
<sequence length="474" mass="53505">MLTTGKKEFWFVVGSQHLYGEETLAEVRAHAQAMTDALNESAVLPYPLVLQDLAVNADKITSIMKEVNYRDEVAGVITWMHTFSPAKMWIRGTKLLQKPLLHLATQFNESIPWPTIDMDFMNLNQSAHGDREYGFINARLKKQNKVVVGYWERPEVQQQIAEWMDVAVAYNESFNIKVARFGDNMRNVAVTEGDKIEAQIQFGWTVDYFGIGDLVQYVNAVTDEEINRLFAEYADLYEFDYGTYSREDWEKSVKVQASYEIAIKRFLDDGGYNAFTTNFEDLYGMKQLPGLAVQRLMAQGYGFAGEGDWKTAALDRLLKVMSRNQSTGFMEDYTYELAAGQESILQSHMLEVDPSLASNKPKIIVSPLGIGDREDPARLVFDGKAGDGVVVSMADFGTHYKLLINEVSAFEPTVPAPNLPVARVLWEVKPNFQDGVKAWLENGGGHHTVVSLFLTTDQMITYAKLVDLEYVVIK</sequence>
<reference key="1">
    <citation type="journal article" date="2004" name="J. Mol. Microbiol. Biotechnol.">
        <title>The complete genome sequence of Bacillus licheniformis DSM13, an organism with great industrial potential.</title>
        <authorList>
            <person name="Veith B."/>
            <person name="Herzberg C."/>
            <person name="Steckel S."/>
            <person name="Feesche J."/>
            <person name="Maurer K.H."/>
            <person name="Ehrenreich P."/>
            <person name="Baeumer S."/>
            <person name="Henne A."/>
            <person name="Liesegang H."/>
            <person name="Merkl R."/>
            <person name="Ehrenreich A."/>
            <person name="Gottschalk G."/>
        </authorList>
    </citation>
    <scope>NUCLEOTIDE SEQUENCE [LARGE SCALE GENOMIC DNA]</scope>
    <source>
        <strain>ATCC 14580 / DSM 13 / JCM 2505 / CCUG 7422 / NBRC 12200 / NCIMB 9375 / NCTC 10341 / NRRL NRS-1264 / Gibson 46</strain>
    </source>
</reference>
<reference key="2">
    <citation type="journal article" date="2004" name="Genome Biol.">
        <title>Complete genome sequence of the industrial bacterium Bacillus licheniformis and comparisons with closely related Bacillus species.</title>
        <authorList>
            <person name="Rey M.W."/>
            <person name="Ramaiya P."/>
            <person name="Nelson B.A."/>
            <person name="Brody-Karpin S.D."/>
            <person name="Zaretsky E.J."/>
            <person name="Tang M."/>
            <person name="Lopez de Leon A."/>
            <person name="Xiang H."/>
            <person name="Gusti V."/>
            <person name="Clausen I.G."/>
            <person name="Olsen P.B."/>
            <person name="Rasmussen M.D."/>
            <person name="Andersen J.T."/>
            <person name="Joergensen P.L."/>
            <person name="Larsen T.S."/>
            <person name="Sorokin A."/>
            <person name="Bolotin A."/>
            <person name="Lapidus A."/>
            <person name="Galleron N."/>
            <person name="Ehrlich S.D."/>
            <person name="Berka R.M."/>
        </authorList>
    </citation>
    <scope>NUCLEOTIDE SEQUENCE [LARGE SCALE GENOMIC DNA]</scope>
    <source>
        <strain>ATCC 14580 / DSM 13 / JCM 2505 / CCUG 7422 / NBRC 12200 / NCIMB 9375 / NCTC 10341 / NRRL NRS-1264 / Gibson 46</strain>
    </source>
</reference>
<protein>
    <recommendedName>
        <fullName evidence="1">L-arabinose isomerase 2</fullName>
        <ecNumber evidence="1">5.3.1.4</ecNumber>
    </recommendedName>
</protein>
<proteinExistence type="inferred from homology"/>
<feature type="chain" id="PRO_0000259336" description="L-arabinose isomerase 2">
    <location>
        <begin position="1"/>
        <end position="474"/>
    </location>
</feature>
<feature type="binding site" evidence="1">
    <location>
        <position position="306"/>
    </location>
    <ligand>
        <name>Mn(2+)</name>
        <dbReference type="ChEBI" id="CHEBI:29035"/>
    </ligand>
</feature>
<feature type="binding site" evidence="1">
    <location>
        <position position="331"/>
    </location>
    <ligand>
        <name>Mn(2+)</name>
        <dbReference type="ChEBI" id="CHEBI:29035"/>
    </ligand>
</feature>
<feature type="binding site" evidence="1">
    <location>
        <position position="348"/>
    </location>
    <ligand>
        <name>Mn(2+)</name>
        <dbReference type="ChEBI" id="CHEBI:29035"/>
    </ligand>
</feature>
<feature type="binding site" evidence="1">
    <location>
        <position position="447"/>
    </location>
    <ligand>
        <name>Mn(2+)</name>
        <dbReference type="ChEBI" id="CHEBI:29035"/>
    </ligand>
</feature>
<keyword id="KW-0054">Arabinose catabolism</keyword>
<keyword id="KW-0119">Carbohydrate metabolism</keyword>
<keyword id="KW-0413">Isomerase</keyword>
<keyword id="KW-0464">Manganese</keyword>
<keyword id="KW-0479">Metal-binding</keyword>
<keyword id="KW-1185">Reference proteome</keyword>